<proteinExistence type="inferred from homology"/>
<keyword id="KW-0067">ATP-binding</keyword>
<keyword id="KW-0963">Cytoplasm</keyword>
<keyword id="KW-0324">Glycolysis</keyword>
<keyword id="KW-0418">Kinase</keyword>
<keyword id="KW-0547">Nucleotide-binding</keyword>
<keyword id="KW-0808">Transferase</keyword>
<protein>
    <recommendedName>
        <fullName evidence="1">Phosphoglycerate kinase</fullName>
        <ecNumber evidence="1">2.7.2.3</ecNumber>
    </recommendedName>
</protein>
<gene>
    <name evidence="1" type="primary">pgk</name>
    <name type="ordered locus">SpyM50252</name>
</gene>
<sequence>MAKLTVKDVDLKGKKVLVRVDFNVPLKDGVITNDNRITAALPTIKYIIEQGGRAILFSHLGRVKEEADKEGKSLAPVAADLAAKLGQDVVFPGVTRGSKLEEAINALEDGQVLLVENTRFEDVDGKKESKNDEELGKYWASLGDGIFVNDAFGTAHRAHASNVGISANVEKAVAGFLLENEIAYIQEAVETPERPFVAILGGSKVSDKIGVIENLLEKADKVLIGGGMTYTFYKAQGIEIGNSLVEEDKLDVAKDLLEKSNGKLILPVDSKEANAFAGYTEVRDTEGEAVSEGFLGLDIGPKSIAEFDQALTGAKTVVWNGPMGVFENPDFQAGTIDVMDAIVKQPGVKSIIGGGDSAAAAINLGRADKFSWISTGGGASMELLEGKVLPGLAALTEK</sequence>
<reference key="1">
    <citation type="journal article" date="2007" name="J. Bacteriol.">
        <title>Complete genome of acute rheumatic fever-associated serotype M5 Streptococcus pyogenes strain Manfredo.</title>
        <authorList>
            <person name="Holden M.T.G."/>
            <person name="Scott A."/>
            <person name="Cherevach I."/>
            <person name="Chillingworth T."/>
            <person name="Churcher C."/>
            <person name="Cronin A."/>
            <person name="Dowd L."/>
            <person name="Feltwell T."/>
            <person name="Hamlin N."/>
            <person name="Holroyd S."/>
            <person name="Jagels K."/>
            <person name="Moule S."/>
            <person name="Mungall K."/>
            <person name="Quail M.A."/>
            <person name="Price C."/>
            <person name="Rabbinowitsch E."/>
            <person name="Sharp S."/>
            <person name="Skelton J."/>
            <person name="Whitehead S."/>
            <person name="Barrell B.G."/>
            <person name="Kehoe M."/>
            <person name="Parkhill J."/>
        </authorList>
    </citation>
    <scope>NUCLEOTIDE SEQUENCE [LARGE SCALE GENOMIC DNA]</scope>
    <source>
        <strain>Manfredo</strain>
    </source>
</reference>
<dbReference type="EC" id="2.7.2.3" evidence="1"/>
<dbReference type="EMBL" id="AM295007">
    <property type="protein sequence ID" value="CAM29594.1"/>
    <property type="molecule type" value="Genomic_DNA"/>
</dbReference>
<dbReference type="RefSeq" id="WP_011888603.1">
    <property type="nucleotide sequence ID" value="NC_009332.1"/>
</dbReference>
<dbReference type="SMR" id="A2RCM1"/>
<dbReference type="KEGG" id="spf:SpyM50252"/>
<dbReference type="HOGENOM" id="CLU_025427_0_1_9"/>
<dbReference type="UniPathway" id="UPA00109">
    <property type="reaction ID" value="UER00185"/>
</dbReference>
<dbReference type="GO" id="GO:0005829">
    <property type="term" value="C:cytosol"/>
    <property type="evidence" value="ECO:0007669"/>
    <property type="project" value="TreeGrafter"/>
</dbReference>
<dbReference type="GO" id="GO:0043531">
    <property type="term" value="F:ADP binding"/>
    <property type="evidence" value="ECO:0007669"/>
    <property type="project" value="TreeGrafter"/>
</dbReference>
<dbReference type="GO" id="GO:0005524">
    <property type="term" value="F:ATP binding"/>
    <property type="evidence" value="ECO:0007669"/>
    <property type="project" value="UniProtKB-KW"/>
</dbReference>
<dbReference type="GO" id="GO:0004618">
    <property type="term" value="F:phosphoglycerate kinase activity"/>
    <property type="evidence" value="ECO:0007669"/>
    <property type="project" value="UniProtKB-UniRule"/>
</dbReference>
<dbReference type="GO" id="GO:0006094">
    <property type="term" value="P:gluconeogenesis"/>
    <property type="evidence" value="ECO:0007669"/>
    <property type="project" value="TreeGrafter"/>
</dbReference>
<dbReference type="GO" id="GO:0006096">
    <property type="term" value="P:glycolytic process"/>
    <property type="evidence" value="ECO:0007669"/>
    <property type="project" value="UniProtKB-UniRule"/>
</dbReference>
<dbReference type="FunFam" id="3.40.50.1260:FF:000001">
    <property type="entry name" value="Phosphoglycerate kinase"/>
    <property type="match status" value="1"/>
</dbReference>
<dbReference type="FunFam" id="3.40.50.1260:FF:000008">
    <property type="entry name" value="Phosphoglycerate kinase"/>
    <property type="match status" value="1"/>
</dbReference>
<dbReference type="Gene3D" id="3.40.50.1260">
    <property type="entry name" value="Phosphoglycerate kinase, N-terminal domain"/>
    <property type="match status" value="2"/>
</dbReference>
<dbReference type="HAMAP" id="MF_00145">
    <property type="entry name" value="Phosphoglyc_kinase"/>
    <property type="match status" value="1"/>
</dbReference>
<dbReference type="InterPro" id="IPR001576">
    <property type="entry name" value="Phosphoglycerate_kinase"/>
</dbReference>
<dbReference type="InterPro" id="IPR015911">
    <property type="entry name" value="Phosphoglycerate_kinase_CS"/>
</dbReference>
<dbReference type="InterPro" id="IPR015824">
    <property type="entry name" value="Phosphoglycerate_kinase_N"/>
</dbReference>
<dbReference type="InterPro" id="IPR036043">
    <property type="entry name" value="Phosphoglycerate_kinase_sf"/>
</dbReference>
<dbReference type="PANTHER" id="PTHR11406">
    <property type="entry name" value="PHOSPHOGLYCERATE KINASE"/>
    <property type="match status" value="1"/>
</dbReference>
<dbReference type="PANTHER" id="PTHR11406:SF23">
    <property type="entry name" value="PHOSPHOGLYCERATE KINASE 1, CHLOROPLASTIC-RELATED"/>
    <property type="match status" value="1"/>
</dbReference>
<dbReference type="Pfam" id="PF00162">
    <property type="entry name" value="PGK"/>
    <property type="match status" value="1"/>
</dbReference>
<dbReference type="PIRSF" id="PIRSF000724">
    <property type="entry name" value="Pgk"/>
    <property type="match status" value="1"/>
</dbReference>
<dbReference type="PRINTS" id="PR00477">
    <property type="entry name" value="PHGLYCKINASE"/>
</dbReference>
<dbReference type="SUPFAM" id="SSF53748">
    <property type="entry name" value="Phosphoglycerate kinase"/>
    <property type="match status" value="1"/>
</dbReference>
<dbReference type="PROSITE" id="PS00111">
    <property type="entry name" value="PGLYCERATE_KINASE"/>
    <property type="match status" value="1"/>
</dbReference>
<evidence type="ECO:0000255" key="1">
    <source>
        <dbReference type="HAMAP-Rule" id="MF_00145"/>
    </source>
</evidence>
<accession>A2RCM1</accession>
<comment type="catalytic activity">
    <reaction evidence="1">
        <text>(2R)-3-phosphoglycerate + ATP = (2R)-3-phospho-glyceroyl phosphate + ADP</text>
        <dbReference type="Rhea" id="RHEA:14801"/>
        <dbReference type="ChEBI" id="CHEBI:30616"/>
        <dbReference type="ChEBI" id="CHEBI:57604"/>
        <dbReference type="ChEBI" id="CHEBI:58272"/>
        <dbReference type="ChEBI" id="CHEBI:456216"/>
        <dbReference type="EC" id="2.7.2.3"/>
    </reaction>
</comment>
<comment type="pathway">
    <text evidence="1">Carbohydrate degradation; glycolysis; pyruvate from D-glyceraldehyde 3-phosphate: step 2/5.</text>
</comment>
<comment type="subunit">
    <text evidence="1">Monomer.</text>
</comment>
<comment type="subcellular location">
    <subcellularLocation>
        <location evidence="1">Cytoplasm</location>
    </subcellularLocation>
</comment>
<comment type="similarity">
    <text evidence="1">Belongs to the phosphoglycerate kinase family.</text>
</comment>
<feature type="chain" id="PRO_1000009658" description="Phosphoglycerate kinase">
    <location>
        <begin position="1"/>
        <end position="398"/>
    </location>
</feature>
<feature type="binding site" evidence="1">
    <location>
        <begin position="21"/>
        <end position="23"/>
    </location>
    <ligand>
        <name>substrate</name>
    </ligand>
</feature>
<feature type="binding site" evidence="1">
    <location>
        <position position="36"/>
    </location>
    <ligand>
        <name>substrate</name>
    </ligand>
</feature>
<feature type="binding site" evidence="1">
    <location>
        <begin position="59"/>
        <end position="62"/>
    </location>
    <ligand>
        <name>substrate</name>
    </ligand>
</feature>
<feature type="binding site" evidence="1">
    <location>
        <position position="119"/>
    </location>
    <ligand>
        <name>substrate</name>
    </ligand>
</feature>
<feature type="binding site" evidence="1">
    <location>
        <position position="157"/>
    </location>
    <ligand>
        <name>substrate</name>
    </ligand>
</feature>
<feature type="binding site" evidence="1">
    <location>
        <position position="208"/>
    </location>
    <ligand>
        <name>ATP</name>
        <dbReference type="ChEBI" id="CHEBI:30616"/>
    </ligand>
</feature>
<feature type="binding site" evidence="1">
    <location>
        <position position="296"/>
    </location>
    <ligand>
        <name>ATP</name>
        <dbReference type="ChEBI" id="CHEBI:30616"/>
    </ligand>
</feature>
<feature type="binding site" evidence="1">
    <location>
        <position position="327"/>
    </location>
    <ligand>
        <name>ATP</name>
        <dbReference type="ChEBI" id="CHEBI:30616"/>
    </ligand>
</feature>
<feature type="binding site" evidence="1">
    <location>
        <begin position="354"/>
        <end position="357"/>
    </location>
    <ligand>
        <name>ATP</name>
        <dbReference type="ChEBI" id="CHEBI:30616"/>
    </ligand>
</feature>
<organism>
    <name type="scientific">Streptococcus pyogenes serotype M5 (strain Manfredo)</name>
    <dbReference type="NCBI Taxonomy" id="160491"/>
    <lineage>
        <taxon>Bacteria</taxon>
        <taxon>Bacillati</taxon>
        <taxon>Bacillota</taxon>
        <taxon>Bacilli</taxon>
        <taxon>Lactobacillales</taxon>
        <taxon>Streptococcaceae</taxon>
        <taxon>Streptococcus</taxon>
    </lineage>
</organism>
<name>PGK_STRPG</name>